<dbReference type="EC" id="2.5.1.47"/>
<dbReference type="UniPathway" id="UPA00136">
    <property type="reaction ID" value="UER00200"/>
</dbReference>
<dbReference type="Proteomes" id="UP000694918">
    <property type="component" value="Unplaced"/>
</dbReference>
<dbReference type="GO" id="GO:0005737">
    <property type="term" value="C:cytoplasm"/>
    <property type="evidence" value="ECO:0007669"/>
    <property type="project" value="UniProtKB-SubCell"/>
</dbReference>
<dbReference type="GO" id="GO:0004124">
    <property type="term" value="F:cysteine synthase activity"/>
    <property type="evidence" value="ECO:0007669"/>
    <property type="project" value="UniProtKB-EC"/>
</dbReference>
<evidence type="ECO:0000250" key="1"/>
<evidence type="ECO:0000250" key="2">
    <source>
        <dbReference type="UniProtKB" id="Q00834"/>
    </source>
</evidence>
<evidence type="ECO:0000255" key="3"/>
<evidence type="ECO:0000305" key="4"/>
<proteinExistence type="evidence at protein level"/>
<organism>
    <name type="scientific">Populus euphratica</name>
    <name type="common">Euphrates poplar</name>
    <dbReference type="NCBI Taxonomy" id="75702"/>
    <lineage>
        <taxon>Eukaryota</taxon>
        <taxon>Viridiplantae</taxon>
        <taxon>Streptophyta</taxon>
        <taxon>Embryophyta</taxon>
        <taxon>Tracheophyta</taxon>
        <taxon>Spermatophyta</taxon>
        <taxon>Magnoliopsida</taxon>
        <taxon>eudicotyledons</taxon>
        <taxon>Gunneridae</taxon>
        <taxon>Pentapetalae</taxon>
        <taxon>rosids</taxon>
        <taxon>fabids</taxon>
        <taxon>Malpighiales</taxon>
        <taxon>Salicaceae</taxon>
        <taxon>Saliceae</taxon>
        <taxon>Populus</taxon>
    </lineage>
</organism>
<comment type="catalytic activity">
    <reaction>
        <text>O-acetyl-L-serine + hydrogen sulfide = L-cysteine + acetate</text>
        <dbReference type="Rhea" id="RHEA:14829"/>
        <dbReference type="ChEBI" id="CHEBI:29919"/>
        <dbReference type="ChEBI" id="CHEBI:30089"/>
        <dbReference type="ChEBI" id="CHEBI:35235"/>
        <dbReference type="ChEBI" id="CHEBI:58340"/>
        <dbReference type="EC" id="2.5.1.47"/>
    </reaction>
</comment>
<comment type="cofactor">
    <cofactor evidence="2">
        <name>pyridoxal 5'-phosphate</name>
        <dbReference type="ChEBI" id="CHEBI:597326"/>
    </cofactor>
</comment>
<comment type="pathway">
    <text>Amino-acid biosynthesis; L-cysteine biosynthesis; L-cysteine from L-serine: step 2/2.</text>
</comment>
<comment type="subunit">
    <text evidence="2">Homodimer.</text>
</comment>
<comment type="subcellular location">
    <subcellularLocation>
        <location evidence="1">Cytoplasm</location>
    </subcellularLocation>
</comment>
<comment type="similarity">
    <text evidence="3">Belongs to the cysteine synthase/cystathionine beta-synthase family.</text>
</comment>
<name>CYSK_POPEU</name>
<sequence length="29" mass="3292">TPNSYILQQFENPANPKLIVAIFPSFGER</sequence>
<protein>
    <recommendedName>
        <fullName>Cysteine synthase</fullName>
        <shortName>CSase</shortName>
        <ecNumber>2.5.1.47</ecNumber>
    </recommendedName>
    <alternativeName>
        <fullName>O-acetylserine (thiol)-lyase</fullName>
        <shortName>OAS-TL</shortName>
    </alternativeName>
    <alternativeName>
        <fullName>O-acetylserine sulfhydrylase</fullName>
    </alternativeName>
</protein>
<keyword id="KW-0028">Amino-acid biosynthesis</keyword>
<keyword id="KW-0198">Cysteine biosynthesis</keyword>
<keyword id="KW-0963">Cytoplasm</keyword>
<keyword id="KW-0903">Direct protein sequencing</keyword>
<keyword id="KW-0663">Pyridoxal phosphate</keyword>
<keyword id="KW-1185">Reference proteome</keyword>
<keyword id="KW-0808">Transferase</keyword>
<accession>P84538</accession>
<reference key="1">
    <citation type="journal article" date="2006" name="Ann. Bot.">
        <title>Proteome profiling of Populus euphratica Oliv. upon heat stress.</title>
        <authorList>
            <person name="Ferreira S."/>
            <person name="Hjernoe K."/>
            <person name="Larsen M."/>
            <person name="Wingsle G."/>
            <person name="Larsen P."/>
            <person name="Fey S."/>
            <person name="Roepstorff P."/>
            <person name="Pais M.S."/>
        </authorList>
    </citation>
    <scope>PROTEIN SEQUENCE</scope>
    <source>
        <tissue>Leaf</tissue>
    </source>
</reference>
<feature type="chain" id="PRO_0000167123" description="Cysteine synthase">
    <location>
        <begin position="1" status="less than"/>
        <end position="29" status="greater than"/>
    </location>
</feature>
<feature type="non-consecutive residues" evidence="4">
    <location>
        <begin position="17"/>
        <end position="18"/>
    </location>
</feature>
<feature type="non-terminal residue">
    <location>
        <position position="1"/>
    </location>
</feature>
<feature type="non-terminal residue">
    <location>
        <position position="29"/>
    </location>
</feature>